<evidence type="ECO:0000255" key="1">
    <source>
        <dbReference type="HAMAP-Rule" id="MF_00205"/>
    </source>
</evidence>
<reference key="1">
    <citation type="journal article" date="2001" name="Science">
        <title>Mechanisms of evolution in Rickettsia conorii and R. prowazekii.</title>
        <authorList>
            <person name="Ogata H."/>
            <person name="Audic S."/>
            <person name="Renesto-Audiffren P."/>
            <person name="Fournier P.-E."/>
            <person name="Barbe V."/>
            <person name="Samson D."/>
            <person name="Roux V."/>
            <person name="Cossart P."/>
            <person name="Weissenbach J."/>
            <person name="Claverie J.-M."/>
            <person name="Raoult D."/>
        </authorList>
    </citation>
    <scope>NUCLEOTIDE SEQUENCE [LARGE SCALE GENOMIC DNA]</scope>
    <source>
        <strain>ATCC VR-613 / Malish 7</strain>
    </source>
</reference>
<protein>
    <recommendedName>
        <fullName evidence="1">UvrABC system protein A</fullName>
        <shortName evidence="1">UvrA protein</shortName>
    </recommendedName>
    <alternativeName>
        <fullName evidence="1">Excinuclease ABC subunit A</fullName>
    </alternativeName>
</protein>
<accession>Q92G31</accession>
<comment type="function">
    <text evidence="1">The UvrABC repair system catalyzes the recognition and processing of DNA lesions. UvrA is an ATPase and a DNA-binding protein. A damage recognition complex composed of 2 UvrA and 2 UvrB subunits scans DNA for abnormalities. When the presence of a lesion has been verified by UvrB, the UvrA molecules dissociate.</text>
</comment>
<comment type="subunit">
    <text evidence="1">Forms a heterotetramer with UvrB during the search for lesions.</text>
</comment>
<comment type="subcellular location">
    <subcellularLocation>
        <location evidence="1">Cytoplasm</location>
    </subcellularLocation>
</comment>
<comment type="similarity">
    <text evidence="1">Belongs to the ABC transporter superfamily. UvrA family.</text>
</comment>
<dbReference type="EMBL" id="AE006914">
    <property type="protein sequence ID" value="AAL03832.1"/>
    <property type="molecule type" value="Genomic_DNA"/>
</dbReference>
<dbReference type="PIR" id="F97861">
    <property type="entry name" value="F97861"/>
</dbReference>
<dbReference type="SMR" id="Q92G31"/>
<dbReference type="KEGG" id="rco:RC1294"/>
<dbReference type="HOGENOM" id="CLU_001370_0_2_5"/>
<dbReference type="Proteomes" id="UP000000816">
    <property type="component" value="Chromosome"/>
</dbReference>
<dbReference type="GO" id="GO:0005737">
    <property type="term" value="C:cytoplasm"/>
    <property type="evidence" value="ECO:0007669"/>
    <property type="project" value="UniProtKB-SubCell"/>
</dbReference>
<dbReference type="GO" id="GO:0009380">
    <property type="term" value="C:excinuclease repair complex"/>
    <property type="evidence" value="ECO:0007669"/>
    <property type="project" value="InterPro"/>
</dbReference>
<dbReference type="GO" id="GO:0005524">
    <property type="term" value="F:ATP binding"/>
    <property type="evidence" value="ECO:0007669"/>
    <property type="project" value="UniProtKB-UniRule"/>
</dbReference>
<dbReference type="GO" id="GO:0016887">
    <property type="term" value="F:ATP hydrolysis activity"/>
    <property type="evidence" value="ECO:0007669"/>
    <property type="project" value="InterPro"/>
</dbReference>
<dbReference type="GO" id="GO:0003677">
    <property type="term" value="F:DNA binding"/>
    <property type="evidence" value="ECO:0007669"/>
    <property type="project" value="UniProtKB-UniRule"/>
</dbReference>
<dbReference type="GO" id="GO:0009381">
    <property type="term" value="F:excinuclease ABC activity"/>
    <property type="evidence" value="ECO:0007669"/>
    <property type="project" value="UniProtKB-UniRule"/>
</dbReference>
<dbReference type="GO" id="GO:0008270">
    <property type="term" value="F:zinc ion binding"/>
    <property type="evidence" value="ECO:0007669"/>
    <property type="project" value="UniProtKB-UniRule"/>
</dbReference>
<dbReference type="GO" id="GO:0006289">
    <property type="term" value="P:nucleotide-excision repair"/>
    <property type="evidence" value="ECO:0007669"/>
    <property type="project" value="UniProtKB-UniRule"/>
</dbReference>
<dbReference type="GO" id="GO:0009432">
    <property type="term" value="P:SOS response"/>
    <property type="evidence" value="ECO:0007669"/>
    <property type="project" value="UniProtKB-UniRule"/>
</dbReference>
<dbReference type="CDD" id="cd03270">
    <property type="entry name" value="ABC_UvrA_I"/>
    <property type="match status" value="1"/>
</dbReference>
<dbReference type="CDD" id="cd03271">
    <property type="entry name" value="ABC_UvrA_II"/>
    <property type="match status" value="1"/>
</dbReference>
<dbReference type="FunFam" id="1.20.1580.10:FF:000002">
    <property type="entry name" value="UvrABC system protein A"/>
    <property type="match status" value="1"/>
</dbReference>
<dbReference type="Gene3D" id="1.10.8.280">
    <property type="entry name" value="ABC transporter ATPase domain-like"/>
    <property type="match status" value="1"/>
</dbReference>
<dbReference type="Gene3D" id="1.20.1580.10">
    <property type="entry name" value="ABC transporter ATPase like domain"/>
    <property type="match status" value="2"/>
</dbReference>
<dbReference type="Gene3D" id="3.30.1490.20">
    <property type="entry name" value="ATP-grasp fold, A domain"/>
    <property type="match status" value="1"/>
</dbReference>
<dbReference type="Gene3D" id="3.40.50.300">
    <property type="entry name" value="P-loop containing nucleotide triphosphate hydrolases"/>
    <property type="match status" value="2"/>
</dbReference>
<dbReference type="HAMAP" id="MF_00205">
    <property type="entry name" value="UvrA"/>
    <property type="match status" value="1"/>
</dbReference>
<dbReference type="InterPro" id="IPR003439">
    <property type="entry name" value="ABC_transporter-like_ATP-bd"/>
</dbReference>
<dbReference type="InterPro" id="IPR017871">
    <property type="entry name" value="ABC_transporter-like_CS"/>
</dbReference>
<dbReference type="InterPro" id="IPR013815">
    <property type="entry name" value="ATP_grasp_subdomain_1"/>
</dbReference>
<dbReference type="InterPro" id="IPR027417">
    <property type="entry name" value="P-loop_NTPase"/>
</dbReference>
<dbReference type="InterPro" id="IPR004602">
    <property type="entry name" value="UvrA"/>
</dbReference>
<dbReference type="InterPro" id="IPR041552">
    <property type="entry name" value="UvrA_DNA-bd"/>
</dbReference>
<dbReference type="InterPro" id="IPR041102">
    <property type="entry name" value="UvrA_inter"/>
</dbReference>
<dbReference type="NCBIfam" id="NF001503">
    <property type="entry name" value="PRK00349.1"/>
    <property type="match status" value="1"/>
</dbReference>
<dbReference type="NCBIfam" id="TIGR00630">
    <property type="entry name" value="uvra"/>
    <property type="match status" value="1"/>
</dbReference>
<dbReference type="PANTHER" id="PTHR43152">
    <property type="entry name" value="UVRABC SYSTEM PROTEIN A"/>
    <property type="match status" value="1"/>
</dbReference>
<dbReference type="PANTHER" id="PTHR43152:SF3">
    <property type="entry name" value="UVRABC SYSTEM PROTEIN A"/>
    <property type="match status" value="1"/>
</dbReference>
<dbReference type="Pfam" id="PF17755">
    <property type="entry name" value="UvrA_DNA-bind"/>
    <property type="match status" value="1"/>
</dbReference>
<dbReference type="Pfam" id="PF17760">
    <property type="entry name" value="UvrA_inter"/>
    <property type="match status" value="1"/>
</dbReference>
<dbReference type="SUPFAM" id="SSF52540">
    <property type="entry name" value="P-loop containing nucleoside triphosphate hydrolases"/>
    <property type="match status" value="2"/>
</dbReference>
<dbReference type="PROSITE" id="PS00211">
    <property type="entry name" value="ABC_TRANSPORTER_1"/>
    <property type="match status" value="2"/>
</dbReference>
<dbReference type="PROSITE" id="PS50893">
    <property type="entry name" value="ABC_TRANSPORTER_2"/>
    <property type="match status" value="2"/>
</dbReference>
<proteinExistence type="inferred from homology"/>
<name>UVRA_RICCN</name>
<organism>
    <name type="scientific">Rickettsia conorii (strain ATCC VR-613 / Malish 7)</name>
    <dbReference type="NCBI Taxonomy" id="272944"/>
    <lineage>
        <taxon>Bacteria</taxon>
        <taxon>Pseudomonadati</taxon>
        <taxon>Pseudomonadota</taxon>
        <taxon>Alphaproteobacteria</taxon>
        <taxon>Rickettsiales</taxon>
        <taxon>Rickettsiaceae</taxon>
        <taxon>Rickettsieae</taxon>
        <taxon>Rickettsia</taxon>
        <taxon>spotted fever group</taxon>
    </lineage>
</organism>
<feature type="chain" id="PRO_0000093083" description="UvrABC system protein A">
    <location>
        <begin position="1"/>
        <end position="955"/>
    </location>
</feature>
<feature type="domain" description="ABC transporter 1" evidence="1">
    <location>
        <begin position="322"/>
        <end position="601"/>
    </location>
</feature>
<feature type="domain" description="ABC transporter 2" evidence="1">
    <location>
        <begin position="621"/>
        <end position="951"/>
    </location>
</feature>
<feature type="zinc finger region" description="C4-type" evidence="1">
    <location>
        <begin position="754"/>
        <end position="780"/>
    </location>
</feature>
<feature type="binding site" evidence="1">
    <location>
        <begin position="35"/>
        <end position="42"/>
    </location>
    <ligand>
        <name>ATP</name>
        <dbReference type="ChEBI" id="CHEBI:30616"/>
    </ligand>
</feature>
<feature type="binding site" evidence="1">
    <location>
        <begin position="654"/>
        <end position="661"/>
    </location>
    <ligand>
        <name>ATP</name>
        <dbReference type="ChEBI" id="CHEBI:30616"/>
    </ligand>
</feature>
<sequence length="955" mass="106317">MIMNQEYIKVRGAKEHNLKNINVNIPRNKFVVITGLSGSGKSSLAFDTIYAEGQRRYVESLSSYARQFLHLQNKPNVESISGLSPAIAIDQKTTSKNPRSTVGTITEIYDYLRLLYARVGIPYSPATGLPIHSQTVSEMVDIINELPKGTKIYLLAPIVRGHKGEFKREIMDLKKQGFQKLIVNGEVCEIDDLPKLDKNKKHNIEVIVDRIVLDESLGNRLADSLESSLNLAEGITYLEIVELPPAVKSEFEKNQRITFSEQYSCPVSGFQLTEIEPRIFSFNSPFGACPKCEGIGKEFFFDRDLIVPDQRIAIKDGAIVPWGSTASKFILETLKALADHYKFSIEVPFVSLSQNVKDILFEGSGEEAIKFEFHDGSKTQIIKQPFAGIIPSLQEKDRTIESVLIKEELAKFKSEHKCTACSGFRLKDEALCVKIANLHIGEVAGMSIAALQKWFSHLEEKLNKKQLFIAERILKEITERLKFLMNVGLDYLTLSREAGTLSGGESQRIRLASQIGSGLSGVLYVLDEPSIGLHQRDNTRLIETLKRLRDLGNTVLVVEHDEETIYEADHIIDIGPGAGIHGGRVIAEGNVEEIKNFEESITGRYLSGRQTIKVPSETRVGHDNRAIELLGAVSNNLDNVDIKIPLGTFTAITGVSGSGKSSLMIHTLYKAALKHLEPTSKVFPGKYRELKGLEYIDKIIDINQSPIGRTPRSNPATYTGAFTHIRDWFVELPESKARGYKVGRFSFNVKGGRCEACQGDGLIKIEMHFLPDVYVKCDICNGHRYNRETLEIKYKGKSIADILMMTVEDAMQFFEKIPLIYEKLITLNEVGLGYIKIGQSATTLSGGEAQRVKLAKELSRRSTGKTLYILDEPTTGLHIDDINKLLKVLHKLVDMGNTVLVIEHNLDVIKTADYIIDVGPEGGDKGGKIVVCGTPADIAACEESHTGRYLKQYLV</sequence>
<keyword id="KW-0067">ATP-binding</keyword>
<keyword id="KW-0963">Cytoplasm</keyword>
<keyword id="KW-0227">DNA damage</keyword>
<keyword id="KW-0228">DNA excision</keyword>
<keyword id="KW-0234">DNA repair</keyword>
<keyword id="KW-0238">DNA-binding</keyword>
<keyword id="KW-0267">Excision nuclease</keyword>
<keyword id="KW-0479">Metal-binding</keyword>
<keyword id="KW-0547">Nucleotide-binding</keyword>
<keyword id="KW-0677">Repeat</keyword>
<keyword id="KW-0742">SOS response</keyword>
<keyword id="KW-0862">Zinc</keyword>
<keyword id="KW-0863">Zinc-finger</keyword>
<gene>
    <name evidence="1" type="primary">uvrA</name>
    <name type="ordered locus">RC1294</name>
</gene>